<protein>
    <recommendedName>
        <fullName evidence="1">NADH-quinone oxidoreductase subunit B</fullName>
        <ecNumber evidence="1">7.1.1.-</ecNumber>
    </recommendedName>
    <alternativeName>
        <fullName evidence="1">NADH dehydrogenase I subunit B</fullName>
    </alternativeName>
    <alternativeName>
        <fullName evidence="1">NDH-1 subunit B</fullName>
    </alternativeName>
</protein>
<accession>B7J6H2</accession>
<evidence type="ECO:0000255" key="1">
    <source>
        <dbReference type="HAMAP-Rule" id="MF_01356"/>
    </source>
</evidence>
<reference key="1">
    <citation type="journal article" date="2008" name="BMC Genomics">
        <title>Acidithiobacillus ferrooxidans metabolism: from genome sequence to industrial applications.</title>
        <authorList>
            <person name="Valdes J."/>
            <person name="Pedroso I."/>
            <person name="Quatrini R."/>
            <person name="Dodson R.J."/>
            <person name="Tettelin H."/>
            <person name="Blake R. II"/>
            <person name="Eisen J.A."/>
            <person name="Holmes D.S."/>
        </authorList>
    </citation>
    <scope>NUCLEOTIDE SEQUENCE [LARGE SCALE GENOMIC DNA]</scope>
    <source>
        <strain>ATCC 23270 / DSM 14882 / CIP 104768 / NCIMB 8455</strain>
    </source>
</reference>
<keyword id="KW-0004">4Fe-4S</keyword>
<keyword id="KW-0997">Cell inner membrane</keyword>
<keyword id="KW-1003">Cell membrane</keyword>
<keyword id="KW-0408">Iron</keyword>
<keyword id="KW-0411">Iron-sulfur</keyword>
<keyword id="KW-0472">Membrane</keyword>
<keyword id="KW-0479">Metal-binding</keyword>
<keyword id="KW-0520">NAD</keyword>
<keyword id="KW-0874">Quinone</keyword>
<keyword id="KW-1185">Reference proteome</keyword>
<keyword id="KW-1278">Translocase</keyword>
<keyword id="KW-0813">Transport</keyword>
<keyword id="KW-0830">Ubiquinone</keyword>
<sequence>MGIEGILEKGFVTTSIDTVVNWSRTGSLWPMTFGLACCAVEMMHAGAARYDLDRFGLLFRPSPRQSDLMIVAGTLVNKMAPALRKVYDQMPEPRWVVSMGSCANGGGYYHYSYSVVRGCDRIVPVDIYVPGCPPTAEALIFGLIQLQKKIRRTNTIAR</sequence>
<proteinExistence type="inferred from homology"/>
<dbReference type="EC" id="7.1.1.-" evidence="1"/>
<dbReference type="EMBL" id="CP001219">
    <property type="protein sequence ID" value="ACK80258.1"/>
    <property type="molecule type" value="Genomic_DNA"/>
</dbReference>
<dbReference type="RefSeq" id="WP_009561179.1">
    <property type="nucleotide sequence ID" value="NC_011761.1"/>
</dbReference>
<dbReference type="SMR" id="B7J6H2"/>
<dbReference type="STRING" id="243159.AFE_2411"/>
<dbReference type="PaxDb" id="243159-AFE_2411"/>
<dbReference type="GeneID" id="65281492"/>
<dbReference type="KEGG" id="afr:AFE_2411"/>
<dbReference type="eggNOG" id="COG0377">
    <property type="taxonomic scope" value="Bacteria"/>
</dbReference>
<dbReference type="HOGENOM" id="CLU_055737_7_3_6"/>
<dbReference type="Proteomes" id="UP000001362">
    <property type="component" value="Chromosome"/>
</dbReference>
<dbReference type="GO" id="GO:0005886">
    <property type="term" value="C:plasma membrane"/>
    <property type="evidence" value="ECO:0007669"/>
    <property type="project" value="UniProtKB-SubCell"/>
</dbReference>
<dbReference type="GO" id="GO:0045271">
    <property type="term" value="C:respiratory chain complex I"/>
    <property type="evidence" value="ECO:0007669"/>
    <property type="project" value="TreeGrafter"/>
</dbReference>
<dbReference type="GO" id="GO:0051539">
    <property type="term" value="F:4 iron, 4 sulfur cluster binding"/>
    <property type="evidence" value="ECO:0007669"/>
    <property type="project" value="UniProtKB-KW"/>
</dbReference>
<dbReference type="GO" id="GO:0005506">
    <property type="term" value="F:iron ion binding"/>
    <property type="evidence" value="ECO:0007669"/>
    <property type="project" value="UniProtKB-UniRule"/>
</dbReference>
<dbReference type="GO" id="GO:0008137">
    <property type="term" value="F:NADH dehydrogenase (ubiquinone) activity"/>
    <property type="evidence" value="ECO:0007669"/>
    <property type="project" value="InterPro"/>
</dbReference>
<dbReference type="GO" id="GO:0050136">
    <property type="term" value="F:NADH:ubiquinone reductase (non-electrogenic) activity"/>
    <property type="evidence" value="ECO:0007669"/>
    <property type="project" value="UniProtKB-UniRule"/>
</dbReference>
<dbReference type="GO" id="GO:0048038">
    <property type="term" value="F:quinone binding"/>
    <property type="evidence" value="ECO:0007669"/>
    <property type="project" value="UniProtKB-KW"/>
</dbReference>
<dbReference type="GO" id="GO:0009060">
    <property type="term" value="P:aerobic respiration"/>
    <property type="evidence" value="ECO:0007669"/>
    <property type="project" value="TreeGrafter"/>
</dbReference>
<dbReference type="GO" id="GO:0015990">
    <property type="term" value="P:electron transport coupled proton transport"/>
    <property type="evidence" value="ECO:0007669"/>
    <property type="project" value="TreeGrafter"/>
</dbReference>
<dbReference type="FunFam" id="3.40.50.12280:FF:000001">
    <property type="entry name" value="NADH-quinone oxidoreductase subunit B 2"/>
    <property type="match status" value="1"/>
</dbReference>
<dbReference type="Gene3D" id="3.40.50.12280">
    <property type="match status" value="1"/>
</dbReference>
<dbReference type="HAMAP" id="MF_01356">
    <property type="entry name" value="NDH1_NuoB"/>
    <property type="match status" value="1"/>
</dbReference>
<dbReference type="InterPro" id="IPR006137">
    <property type="entry name" value="NADH_UbQ_OxRdtase-like_20kDa"/>
</dbReference>
<dbReference type="InterPro" id="IPR006138">
    <property type="entry name" value="NADH_UQ_OxRdtase_20Kd_su"/>
</dbReference>
<dbReference type="NCBIfam" id="TIGR01957">
    <property type="entry name" value="nuoB_fam"/>
    <property type="match status" value="1"/>
</dbReference>
<dbReference type="NCBIfam" id="NF005012">
    <property type="entry name" value="PRK06411.1"/>
    <property type="match status" value="1"/>
</dbReference>
<dbReference type="PANTHER" id="PTHR11995">
    <property type="entry name" value="NADH DEHYDROGENASE"/>
    <property type="match status" value="1"/>
</dbReference>
<dbReference type="PANTHER" id="PTHR11995:SF14">
    <property type="entry name" value="NADH DEHYDROGENASE [UBIQUINONE] IRON-SULFUR PROTEIN 7, MITOCHONDRIAL"/>
    <property type="match status" value="1"/>
</dbReference>
<dbReference type="Pfam" id="PF01058">
    <property type="entry name" value="Oxidored_q6"/>
    <property type="match status" value="1"/>
</dbReference>
<dbReference type="SUPFAM" id="SSF56770">
    <property type="entry name" value="HydA/Nqo6-like"/>
    <property type="match status" value="1"/>
</dbReference>
<dbReference type="PROSITE" id="PS01150">
    <property type="entry name" value="COMPLEX1_20K"/>
    <property type="match status" value="1"/>
</dbReference>
<feature type="chain" id="PRO_0000376100" description="NADH-quinone oxidoreductase subunit B">
    <location>
        <begin position="1"/>
        <end position="158"/>
    </location>
</feature>
<feature type="binding site" evidence="1">
    <location>
        <position position="37"/>
    </location>
    <ligand>
        <name>[4Fe-4S] cluster</name>
        <dbReference type="ChEBI" id="CHEBI:49883"/>
    </ligand>
</feature>
<feature type="binding site" evidence="1">
    <location>
        <position position="38"/>
    </location>
    <ligand>
        <name>[4Fe-4S] cluster</name>
        <dbReference type="ChEBI" id="CHEBI:49883"/>
    </ligand>
</feature>
<feature type="binding site" evidence="1">
    <location>
        <position position="102"/>
    </location>
    <ligand>
        <name>[4Fe-4S] cluster</name>
        <dbReference type="ChEBI" id="CHEBI:49883"/>
    </ligand>
</feature>
<feature type="binding site" evidence="1">
    <location>
        <position position="132"/>
    </location>
    <ligand>
        <name>[4Fe-4S] cluster</name>
        <dbReference type="ChEBI" id="CHEBI:49883"/>
    </ligand>
</feature>
<comment type="function">
    <text evidence="1">NDH-1 shuttles electrons from NADH, via FMN and iron-sulfur (Fe-S) centers, to quinones in the respiratory chain. The immediate electron acceptor for the enzyme in this species is believed to be ubiquinone. Couples the redox reaction to proton translocation (for every two electrons transferred, four hydrogen ions are translocated across the cytoplasmic membrane), and thus conserves the redox energy in a proton gradient.</text>
</comment>
<comment type="catalytic activity">
    <reaction evidence="1">
        <text>a quinone + NADH + 5 H(+)(in) = a quinol + NAD(+) + 4 H(+)(out)</text>
        <dbReference type="Rhea" id="RHEA:57888"/>
        <dbReference type="ChEBI" id="CHEBI:15378"/>
        <dbReference type="ChEBI" id="CHEBI:24646"/>
        <dbReference type="ChEBI" id="CHEBI:57540"/>
        <dbReference type="ChEBI" id="CHEBI:57945"/>
        <dbReference type="ChEBI" id="CHEBI:132124"/>
    </reaction>
</comment>
<comment type="cofactor">
    <cofactor evidence="1">
        <name>[4Fe-4S] cluster</name>
        <dbReference type="ChEBI" id="CHEBI:49883"/>
    </cofactor>
    <text evidence="1">Binds 1 [4Fe-4S] cluster.</text>
</comment>
<comment type="subunit">
    <text evidence="1">NDH-1 is composed of 14 different subunits. Subunits NuoB, C, D, E, F, and G constitute the peripheral sector of the complex.</text>
</comment>
<comment type="subcellular location">
    <subcellularLocation>
        <location evidence="1">Cell inner membrane</location>
        <topology evidence="1">Peripheral membrane protein</topology>
        <orientation evidence="1">Cytoplasmic side</orientation>
    </subcellularLocation>
</comment>
<comment type="similarity">
    <text evidence="1">Belongs to the complex I 20 kDa subunit family.</text>
</comment>
<name>NUOB_ACIF2</name>
<organism>
    <name type="scientific">Acidithiobacillus ferrooxidans (strain ATCC 23270 / DSM 14882 / CIP 104768 / NCIMB 8455)</name>
    <name type="common">Ferrobacillus ferrooxidans (strain ATCC 23270)</name>
    <dbReference type="NCBI Taxonomy" id="243159"/>
    <lineage>
        <taxon>Bacteria</taxon>
        <taxon>Pseudomonadati</taxon>
        <taxon>Pseudomonadota</taxon>
        <taxon>Acidithiobacillia</taxon>
        <taxon>Acidithiobacillales</taxon>
        <taxon>Acidithiobacillaceae</taxon>
        <taxon>Acidithiobacillus</taxon>
    </lineage>
</organism>
<gene>
    <name evidence="1" type="primary">nuoB</name>
    <name type="ordered locus">AFE_2411</name>
</gene>